<proteinExistence type="inferred from homology"/>
<organism>
    <name type="scientific">Rhodopseudomonas palustris (strain BisB18)</name>
    <dbReference type="NCBI Taxonomy" id="316056"/>
    <lineage>
        <taxon>Bacteria</taxon>
        <taxon>Pseudomonadati</taxon>
        <taxon>Pseudomonadota</taxon>
        <taxon>Alphaproteobacteria</taxon>
        <taxon>Hyphomicrobiales</taxon>
        <taxon>Nitrobacteraceae</taxon>
        <taxon>Rhodopseudomonas</taxon>
    </lineage>
</organism>
<evidence type="ECO:0000250" key="1"/>
<evidence type="ECO:0000255" key="2"/>
<evidence type="ECO:0000256" key="3">
    <source>
        <dbReference type="SAM" id="MobiDB-lite"/>
    </source>
</evidence>
<evidence type="ECO:0000305" key="4"/>
<reference key="1">
    <citation type="submission" date="2006-03" db="EMBL/GenBank/DDBJ databases">
        <title>Complete sequence of Rhodopseudomonas palustris BisB18.</title>
        <authorList>
            <consortium name="US DOE Joint Genome Institute"/>
            <person name="Copeland A."/>
            <person name="Lucas S."/>
            <person name="Lapidus A."/>
            <person name="Barry K."/>
            <person name="Detter J.C."/>
            <person name="Glavina del Rio T."/>
            <person name="Hammon N."/>
            <person name="Israni S."/>
            <person name="Dalin E."/>
            <person name="Tice H."/>
            <person name="Pitluck S."/>
            <person name="Chain P."/>
            <person name="Malfatti S."/>
            <person name="Shin M."/>
            <person name="Vergez L."/>
            <person name="Schmutz J."/>
            <person name="Larimer F."/>
            <person name="Land M."/>
            <person name="Hauser L."/>
            <person name="Pelletier D.A."/>
            <person name="Kyrpides N."/>
            <person name="Anderson I."/>
            <person name="Oda Y."/>
            <person name="Harwood C.S."/>
            <person name="Richardson P."/>
        </authorList>
    </citation>
    <scope>NUCLEOTIDE SEQUENCE [LARGE SCALE GENOMIC DNA]</scope>
    <source>
        <strain>BisB18</strain>
    </source>
</reference>
<name>ATPF2_RHOPB</name>
<sequence>MAEGHGDANGATAHTAADGGHKAPFPPFQKDTFASQLVSLLIAFVALYLIVSKIALPRVGSVLDERAKRIEDDFAAAQRLKGESDDALKAYETELAQARARAQAIGAETRERLNAASEAERKSLEEKLAVKLAEAEKTIAATRETAMSNVRGIAADAAAAIVQQLSGLVPDGKALDRAVDATLKGSQA</sequence>
<keyword id="KW-0066">ATP synthesis</keyword>
<keyword id="KW-0997">Cell inner membrane</keyword>
<keyword id="KW-1003">Cell membrane</keyword>
<keyword id="KW-0138">CF(0)</keyword>
<keyword id="KW-0375">Hydrogen ion transport</keyword>
<keyword id="KW-0406">Ion transport</keyword>
<keyword id="KW-0472">Membrane</keyword>
<keyword id="KW-0812">Transmembrane</keyword>
<keyword id="KW-1133">Transmembrane helix</keyword>
<keyword id="KW-0813">Transport</keyword>
<dbReference type="EMBL" id="CP000301">
    <property type="protein sequence ID" value="ABD90336.1"/>
    <property type="molecule type" value="Genomic_DNA"/>
</dbReference>
<dbReference type="SMR" id="Q20X00"/>
<dbReference type="STRING" id="316056.RPC_4814"/>
<dbReference type="KEGG" id="rpc:RPC_4814"/>
<dbReference type="eggNOG" id="COG0711">
    <property type="taxonomic scope" value="Bacteria"/>
</dbReference>
<dbReference type="HOGENOM" id="CLU_079215_1_2_5"/>
<dbReference type="OrthoDB" id="9805716at2"/>
<dbReference type="GO" id="GO:0005886">
    <property type="term" value="C:plasma membrane"/>
    <property type="evidence" value="ECO:0007669"/>
    <property type="project" value="UniProtKB-SubCell"/>
</dbReference>
<dbReference type="GO" id="GO:0045259">
    <property type="term" value="C:proton-transporting ATP synthase complex"/>
    <property type="evidence" value="ECO:0007669"/>
    <property type="project" value="UniProtKB-KW"/>
</dbReference>
<dbReference type="GO" id="GO:0046933">
    <property type="term" value="F:proton-transporting ATP synthase activity, rotational mechanism"/>
    <property type="evidence" value="ECO:0007669"/>
    <property type="project" value="UniProtKB-UniRule"/>
</dbReference>
<dbReference type="GO" id="GO:0046961">
    <property type="term" value="F:proton-transporting ATPase activity, rotational mechanism"/>
    <property type="evidence" value="ECO:0007669"/>
    <property type="project" value="TreeGrafter"/>
</dbReference>
<dbReference type="CDD" id="cd06503">
    <property type="entry name" value="ATP-synt_Fo_b"/>
    <property type="match status" value="1"/>
</dbReference>
<dbReference type="Gene3D" id="6.10.250.1580">
    <property type="match status" value="1"/>
</dbReference>
<dbReference type="HAMAP" id="MF_01398">
    <property type="entry name" value="ATP_synth_b_bprime"/>
    <property type="match status" value="1"/>
</dbReference>
<dbReference type="InterPro" id="IPR002146">
    <property type="entry name" value="ATP_synth_b/b'su_bac/chlpt"/>
</dbReference>
<dbReference type="InterPro" id="IPR050059">
    <property type="entry name" value="ATP_synthase_B_chain"/>
</dbReference>
<dbReference type="PANTHER" id="PTHR33445:SF1">
    <property type="entry name" value="ATP SYNTHASE SUBUNIT B"/>
    <property type="match status" value="1"/>
</dbReference>
<dbReference type="PANTHER" id="PTHR33445">
    <property type="entry name" value="ATP SYNTHASE SUBUNIT B', CHLOROPLASTIC"/>
    <property type="match status" value="1"/>
</dbReference>
<dbReference type="Pfam" id="PF00430">
    <property type="entry name" value="ATP-synt_B"/>
    <property type="match status" value="1"/>
</dbReference>
<gene>
    <name type="primary">atpF2</name>
    <name type="synonym">atpG</name>
    <name type="ordered locus">RPC_4814</name>
</gene>
<protein>
    <recommendedName>
        <fullName>ATP synthase subunit b 2</fullName>
    </recommendedName>
    <alternativeName>
        <fullName>ATP synthase F(0) sector subunit b 2</fullName>
    </alternativeName>
    <alternativeName>
        <fullName>ATPase subunit I 2</fullName>
    </alternativeName>
    <alternativeName>
        <fullName>F-type ATPase subunit b 2</fullName>
        <shortName>F-ATPase subunit b 2</shortName>
    </alternativeName>
</protein>
<comment type="function">
    <text evidence="1">F(1)F(0) ATP synthase produces ATP from ADP in the presence of a proton or sodium gradient. F-type ATPases consist of two structural domains, F(1) containing the extramembraneous catalytic core and F(0) containing the membrane proton channel, linked together by a central stalk and a peripheral stalk. During catalysis, ATP synthesis in the catalytic domain of F(1) is coupled via a rotary mechanism of the central stalk subunits to proton translocation (By similarity).</text>
</comment>
<comment type="function">
    <text evidence="1">Component of the F(0) channel, it forms part of the peripheral stalk, linking F(1) to F(0). The b'-subunit is a diverged and duplicated form of b found in plants and photosynthetic bacteria (By similarity).</text>
</comment>
<comment type="subunit">
    <text evidence="1">F-type ATPases have 2 components, F(1) - the catalytic core - and F(0) - the membrane proton channel. F(1) has five subunits: alpha(3), beta(3), gamma(1), delta(1), epsilon(1). F(0) has three main subunits: a(1), b(2) and c(10-14). The alpha and beta chains form an alternating ring which encloses part of the gamma chain. F(1) is attached to F(0) by a central stalk formed by the gamma and epsilon chains, while a peripheral stalk is formed by the delta and b chains (By similarity).</text>
</comment>
<comment type="subcellular location">
    <subcellularLocation>
        <location evidence="1">Cell inner membrane</location>
        <topology evidence="1">Single-pass membrane protein</topology>
    </subcellularLocation>
</comment>
<comment type="similarity">
    <text evidence="4">Belongs to the ATPase B chain family.</text>
</comment>
<feature type="chain" id="PRO_0000369041" description="ATP synthase subunit b 2">
    <location>
        <begin position="1"/>
        <end position="188"/>
    </location>
</feature>
<feature type="transmembrane region" description="Helical" evidence="2">
    <location>
        <begin position="37"/>
        <end position="57"/>
    </location>
</feature>
<feature type="region of interest" description="Disordered" evidence="3">
    <location>
        <begin position="1"/>
        <end position="23"/>
    </location>
</feature>
<feature type="compositionally biased region" description="Low complexity" evidence="3">
    <location>
        <begin position="8"/>
        <end position="18"/>
    </location>
</feature>
<accession>Q20X00</accession>